<accession>Q1AX11</accession>
<protein>
    <recommendedName>
        <fullName evidence="1">ATP phosphoribosyltransferase</fullName>
        <shortName evidence="1">ATP-PRT</shortName>
        <shortName evidence="1">ATP-PRTase</shortName>
        <ecNumber evidence="1">2.4.2.17</ecNumber>
    </recommendedName>
</protein>
<comment type="function">
    <text evidence="1">Catalyzes the condensation of ATP and 5-phosphoribose 1-diphosphate to form N'-(5'-phosphoribosyl)-ATP (PR-ATP). Has a crucial role in the pathway because the rate of histidine biosynthesis seems to be controlled primarily by regulation of HisG enzymatic activity.</text>
</comment>
<comment type="catalytic activity">
    <reaction evidence="1">
        <text>1-(5-phospho-beta-D-ribosyl)-ATP + diphosphate = 5-phospho-alpha-D-ribose 1-diphosphate + ATP</text>
        <dbReference type="Rhea" id="RHEA:18473"/>
        <dbReference type="ChEBI" id="CHEBI:30616"/>
        <dbReference type="ChEBI" id="CHEBI:33019"/>
        <dbReference type="ChEBI" id="CHEBI:58017"/>
        <dbReference type="ChEBI" id="CHEBI:73183"/>
        <dbReference type="EC" id="2.4.2.17"/>
    </reaction>
</comment>
<comment type="pathway">
    <text evidence="1">Amino-acid biosynthesis; L-histidine biosynthesis; L-histidine from 5-phospho-alpha-D-ribose 1-diphosphate: step 1/9.</text>
</comment>
<comment type="subunit">
    <text evidence="1">Heteromultimer composed of HisG and HisZ subunits.</text>
</comment>
<comment type="subcellular location">
    <subcellularLocation>
        <location evidence="1">Cytoplasm</location>
    </subcellularLocation>
</comment>
<comment type="domain">
    <text>Lacks the C-terminal regulatory region which is replaced by HisZ.</text>
</comment>
<comment type="similarity">
    <text evidence="1">Belongs to the ATP phosphoribosyltransferase family. Short subfamily.</text>
</comment>
<organism>
    <name type="scientific">Rubrobacter xylanophilus (strain DSM 9941 / JCM 11954 / NBRC 16129 / PRD-1)</name>
    <dbReference type="NCBI Taxonomy" id="266117"/>
    <lineage>
        <taxon>Bacteria</taxon>
        <taxon>Bacillati</taxon>
        <taxon>Actinomycetota</taxon>
        <taxon>Rubrobacteria</taxon>
        <taxon>Rubrobacterales</taxon>
        <taxon>Rubrobacteraceae</taxon>
        <taxon>Rubrobacter</taxon>
    </lineage>
</organism>
<dbReference type="EC" id="2.4.2.17" evidence="1"/>
<dbReference type="EMBL" id="CP000386">
    <property type="protein sequence ID" value="ABG04067.1"/>
    <property type="molecule type" value="Genomic_DNA"/>
</dbReference>
<dbReference type="RefSeq" id="WP_011564085.1">
    <property type="nucleotide sequence ID" value="NC_008148.1"/>
</dbReference>
<dbReference type="SMR" id="Q1AX11"/>
<dbReference type="STRING" id="266117.Rxyl_1101"/>
<dbReference type="KEGG" id="rxy:Rxyl_1101"/>
<dbReference type="eggNOG" id="COG0040">
    <property type="taxonomic scope" value="Bacteria"/>
</dbReference>
<dbReference type="HOGENOM" id="CLU_038115_2_0_11"/>
<dbReference type="OrthoDB" id="9801867at2"/>
<dbReference type="PhylomeDB" id="Q1AX11"/>
<dbReference type="UniPathway" id="UPA00031">
    <property type="reaction ID" value="UER00006"/>
</dbReference>
<dbReference type="Proteomes" id="UP000006637">
    <property type="component" value="Chromosome"/>
</dbReference>
<dbReference type="GO" id="GO:0005737">
    <property type="term" value="C:cytoplasm"/>
    <property type="evidence" value="ECO:0007669"/>
    <property type="project" value="UniProtKB-SubCell"/>
</dbReference>
<dbReference type="GO" id="GO:0005524">
    <property type="term" value="F:ATP binding"/>
    <property type="evidence" value="ECO:0007669"/>
    <property type="project" value="UniProtKB-KW"/>
</dbReference>
<dbReference type="GO" id="GO:0003879">
    <property type="term" value="F:ATP phosphoribosyltransferase activity"/>
    <property type="evidence" value="ECO:0007669"/>
    <property type="project" value="UniProtKB-UniRule"/>
</dbReference>
<dbReference type="GO" id="GO:0000105">
    <property type="term" value="P:L-histidine biosynthetic process"/>
    <property type="evidence" value="ECO:0007669"/>
    <property type="project" value="UniProtKB-UniRule"/>
</dbReference>
<dbReference type="CDD" id="cd13595">
    <property type="entry name" value="PBP2_HisGs"/>
    <property type="match status" value="1"/>
</dbReference>
<dbReference type="FunFam" id="3.40.190.10:FF:000008">
    <property type="entry name" value="ATP phosphoribosyltransferase"/>
    <property type="match status" value="1"/>
</dbReference>
<dbReference type="Gene3D" id="3.40.190.10">
    <property type="entry name" value="Periplasmic binding protein-like II"/>
    <property type="match status" value="2"/>
</dbReference>
<dbReference type="HAMAP" id="MF_01018">
    <property type="entry name" value="HisG_Short"/>
    <property type="match status" value="1"/>
</dbReference>
<dbReference type="InterPro" id="IPR013820">
    <property type="entry name" value="ATP_PRibTrfase_cat"/>
</dbReference>
<dbReference type="InterPro" id="IPR018198">
    <property type="entry name" value="ATP_PRibTrfase_CS"/>
</dbReference>
<dbReference type="InterPro" id="IPR001348">
    <property type="entry name" value="ATP_PRibTrfase_HisG"/>
</dbReference>
<dbReference type="InterPro" id="IPR024893">
    <property type="entry name" value="ATP_PRibTrfase_HisG_short"/>
</dbReference>
<dbReference type="NCBIfam" id="TIGR00070">
    <property type="entry name" value="hisG"/>
    <property type="match status" value="1"/>
</dbReference>
<dbReference type="PANTHER" id="PTHR21403:SF8">
    <property type="entry name" value="ATP PHOSPHORIBOSYLTRANSFERASE"/>
    <property type="match status" value="1"/>
</dbReference>
<dbReference type="PANTHER" id="PTHR21403">
    <property type="entry name" value="ATP PHOSPHORIBOSYLTRANSFERASE ATP-PRTASE"/>
    <property type="match status" value="1"/>
</dbReference>
<dbReference type="Pfam" id="PF01634">
    <property type="entry name" value="HisG"/>
    <property type="match status" value="1"/>
</dbReference>
<dbReference type="SUPFAM" id="SSF53850">
    <property type="entry name" value="Periplasmic binding protein-like II"/>
    <property type="match status" value="1"/>
</dbReference>
<dbReference type="PROSITE" id="PS01316">
    <property type="entry name" value="ATP_P_PHORIBOSYLTR"/>
    <property type="match status" value="1"/>
</dbReference>
<sequence length="216" mass="23277">MRGLRIAVPKGAIFEDALRALEAAGLPAGALRGNGRRLFHRAGGVEFIVSRPSDVPVFVEHGAADVGIVGKDVLEEQEPNVMELVDLGSGACRMVLAAPRERASQVERAIAHAEVVRVATKFPRTARRYFEEMGRQAEVIELHGSVELAPLVGLSECIVDLTATGTTLRENDLEVLDEISRSTARLIANRGSYRLRHAEIRGLLASVGREGRPVGG</sequence>
<name>HIS1_RUBXD</name>
<reference key="1">
    <citation type="submission" date="2006-06" db="EMBL/GenBank/DDBJ databases">
        <title>Complete sequence of Rubrobacter xylanophilus DSM 9941.</title>
        <authorList>
            <consortium name="US DOE Joint Genome Institute"/>
            <person name="Copeland A."/>
            <person name="Lucas S."/>
            <person name="Lapidus A."/>
            <person name="Barry K."/>
            <person name="Detter J.C."/>
            <person name="Glavina del Rio T."/>
            <person name="Hammon N."/>
            <person name="Israni S."/>
            <person name="Dalin E."/>
            <person name="Tice H."/>
            <person name="Pitluck S."/>
            <person name="Munk A.C."/>
            <person name="Brettin T."/>
            <person name="Bruce D."/>
            <person name="Han C."/>
            <person name="Tapia R."/>
            <person name="Gilna P."/>
            <person name="Schmutz J."/>
            <person name="Larimer F."/>
            <person name="Land M."/>
            <person name="Hauser L."/>
            <person name="Kyrpides N."/>
            <person name="Lykidis A."/>
            <person name="da Costa M.S."/>
            <person name="Rainey F.A."/>
            <person name="Empadinhas N."/>
            <person name="Jolivet E."/>
            <person name="Battista J.R."/>
            <person name="Richardson P."/>
        </authorList>
    </citation>
    <scope>NUCLEOTIDE SEQUENCE [LARGE SCALE GENOMIC DNA]</scope>
    <source>
        <strain>DSM 9941 / JCM 11954 / NBRC 16129 / PRD-1</strain>
    </source>
</reference>
<feature type="chain" id="PRO_1000063306" description="ATP phosphoribosyltransferase">
    <location>
        <begin position="1"/>
        <end position="216"/>
    </location>
</feature>
<gene>
    <name evidence="1" type="primary">hisG</name>
    <name type="ordered locus">Rxyl_1101</name>
</gene>
<proteinExistence type="inferred from homology"/>
<keyword id="KW-0028">Amino-acid biosynthesis</keyword>
<keyword id="KW-0067">ATP-binding</keyword>
<keyword id="KW-0963">Cytoplasm</keyword>
<keyword id="KW-0328">Glycosyltransferase</keyword>
<keyword id="KW-0368">Histidine biosynthesis</keyword>
<keyword id="KW-0547">Nucleotide-binding</keyword>
<keyword id="KW-1185">Reference proteome</keyword>
<keyword id="KW-0808">Transferase</keyword>
<evidence type="ECO:0000255" key="1">
    <source>
        <dbReference type="HAMAP-Rule" id="MF_01018"/>
    </source>
</evidence>